<evidence type="ECO:0000255" key="1">
    <source>
        <dbReference type="HAMAP-Rule" id="MF_00200"/>
    </source>
</evidence>
<gene>
    <name evidence="1" type="primary">rtcA</name>
    <name type="ordered locus">ECIAI39_3900</name>
</gene>
<dbReference type="EC" id="6.5.1.4" evidence="1"/>
<dbReference type="EMBL" id="CU928164">
    <property type="protein sequence ID" value="CAR20012.1"/>
    <property type="molecule type" value="Genomic_DNA"/>
</dbReference>
<dbReference type="RefSeq" id="WP_012602549.1">
    <property type="nucleotide sequence ID" value="NC_011750.1"/>
</dbReference>
<dbReference type="RefSeq" id="YP_002409793.1">
    <property type="nucleotide sequence ID" value="NC_011750.1"/>
</dbReference>
<dbReference type="SMR" id="B7NMI4"/>
<dbReference type="STRING" id="585057.ECIAI39_3900"/>
<dbReference type="KEGG" id="ect:ECIAI39_3900"/>
<dbReference type="PATRIC" id="fig|585057.6.peg.4038"/>
<dbReference type="HOGENOM" id="CLU_027882_0_0_6"/>
<dbReference type="Proteomes" id="UP000000749">
    <property type="component" value="Chromosome"/>
</dbReference>
<dbReference type="GO" id="GO:0005737">
    <property type="term" value="C:cytoplasm"/>
    <property type="evidence" value="ECO:0007669"/>
    <property type="project" value="UniProtKB-SubCell"/>
</dbReference>
<dbReference type="GO" id="GO:0005524">
    <property type="term" value="F:ATP binding"/>
    <property type="evidence" value="ECO:0007669"/>
    <property type="project" value="UniProtKB-KW"/>
</dbReference>
<dbReference type="GO" id="GO:0003963">
    <property type="term" value="F:RNA-3'-phosphate cyclase activity"/>
    <property type="evidence" value="ECO:0007669"/>
    <property type="project" value="UniProtKB-UniRule"/>
</dbReference>
<dbReference type="GO" id="GO:0006396">
    <property type="term" value="P:RNA processing"/>
    <property type="evidence" value="ECO:0007669"/>
    <property type="project" value="InterPro"/>
</dbReference>
<dbReference type="FunFam" id="3.65.10.20:FF:000002">
    <property type="entry name" value="GM19193"/>
    <property type="match status" value="1"/>
</dbReference>
<dbReference type="FunFam" id="3.30.360.20:FF:000003">
    <property type="entry name" value="RNA 3'-terminal phosphate cyclase"/>
    <property type="match status" value="1"/>
</dbReference>
<dbReference type="Gene3D" id="3.65.10.20">
    <property type="entry name" value="RNA 3'-terminal phosphate cyclase domain"/>
    <property type="match status" value="1"/>
</dbReference>
<dbReference type="Gene3D" id="3.30.360.20">
    <property type="entry name" value="RNA 3'-terminal phosphate cyclase, insert domain"/>
    <property type="match status" value="1"/>
</dbReference>
<dbReference type="HAMAP" id="MF_00200">
    <property type="entry name" value="RTC"/>
    <property type="match status" value="1"/>
</dbReference>
<dbReference type="InterPro" id="IPR013791">
    <property type="entry name" value="RNA3'-term_phos_cycl_insert"/>
</dbReference>
<dbReference type="InterPro" id="IPR023797">
    <property type="entry name" value="RNA3'_phos_cyclase_dom"/>
</dbReference>
<dbReference type="InterPro" id="IPR037136">
    <property type="entry name" value="RNA3'_phos_cyclase_dom_sf"/>
</dbReference>
<dbReference type="InterPro" id="IPR000228">
    <property type="entry name" value="RNA3'_term_phos_cyc"/>
</dbReference>
<dbReference type="InterPro" id="IPR017770">
    <property type="entry name" value="RNA3'_term_phos_cyc_type_1"/>
</dbReference>
<dbReference type="InterPro" id="IPR020719">
    <property type="entry name" value="RNA3'_term_phos_cycl-like_CS"/>
</dbReference>
<dbReference type="InterPro" id="IPR013792">
    <property type="entry name" value="RNA3'P_cycl/enolpyr_Trfase_a/b"/>
</dbReference>
<dbReference type="InterPro" id="IPR036553">
    <property type="entry name" value="RPTC_insert"/>
</dbReference>
<dbReference type="NCBIfam" id="NF003246">
    <property type="entry name" value="PRK04204.1-2"/>
    <property type="match status" value="1"/>
</dbReference>
<dbReference type="NCBIfam" id="NF003247">
    <property type="entry name" value="PRK04204.1-3"/>
    <property type="match status" value="1"/>
</dbReference>
<dbReference type="NCBIfam" id="TIGR03399">
    <property type="entry name" value="RNA_3prim_cycl"/>
    <property type="match status" value="1"/>
</dbReference>
<dbReference type="PANTHER" id="PTHR11096">
    <property type="entry name" value="RNA 3' TERMINAL PHOSPHATE CYCLASE"/>
    <property type="match status" value="1"/>
</dbReference>
<dbReference type="PANTHER" id="PTHR11096:SF0">
    <property type="entry name" value="RNA 3'-TERMINAL PHOSPHATE CYCLASE"/>
    <property type="match status" value="1"/>
</dbReference>
<dbReference type="Pfam" id="PF01137">
    <property type="entry name" value="RTC"/>
    <property type="match status" value="1"/>
</dbReference>
<dbReference type="Pfam" id="PF05189">
    <property type="entry name" value="RTC_insert"/>
    <property type="match status" value="1"/>
</dbReference>
<dbReference type="PIRSF" id="PIRSF005378">
    <property type="entry name" value="RNA3'_term_phos_cycl_euk"/>
    <property type="match status" value="1"/>
</dbReference>
<dbReference type="SUPFAM" id="SSF55205">
    <property type="entry name" value="EPT/RTPC-like"/>
    <property type="match status" value="2"/>
</dbReference>
<dbReference type="SUPFAM" id="SSF52913">
    <property type="entry name" value="RNA 3'-terminal phosphate cyclase, RPTC, insert domain"/>
    <property type="match status" value="1"/>
</dbReference>
<dbReference type="PROSITE" id="PS01287">
    <property type="entry name" value="RTC"/>
    <property type="match status" value="1"/>
</dbReference>
<accession>B7NMI4</accession>
<sequence length="338" mass="35903">MKRMIALDGAQGEGGGQILRSALSLSMITGLPFTITGIRAGRAKPGLLRQHLTAVKAAAEICRATVEGAELGSQRLLFRPGTVRGGDYRFAIGSAGSCTLVLQTVLPALWFADGPSRVEVSGGTDNPSAPPADFIRRVLEPLLAKIGIHQQTTLLRHGFYPAGGGVVATEVSPVTSFNTLQLGERGNIVRLRGEVLLAGVPRHVAEREIATLAASFSLHEQNIHNLPRDQGPGNTVSLEVESENITERFFVVGEKRVSAEVVAAQLVKEVKRYLASPAAVGEYLADQLVLPMALAGAGEFTVAHPSCHLLTNIAVVERFLPVRFGLVEADGVTRVSIE</sequence>
<reference key="1">
    <citation type="journal article" date="2009" name="PLoS Genet.">
        <title>Organised genome dynamics in the Escherichia coli species results in highly diverse adaptive paths.</title>
        <authorList>
            <person name="Touchon M."/>
            <person name="Hoede C."/>
            <person name="Tenaillon O."/>
            <person name="Barbe V."/>
            <person name="Baeriswyl S."/>
            <person name="Bidet P."/>
            <person name="Bingen E."/>
            <person name="Bonacorsi S."/>
            <person name="Bouchier C."/>
            <person name="Bouvet O."/>
            <person name="Calteau A."/>
            <person name="Chiapello H."/>
            <person name="Clermont O."/>
            <person name="Cruveiller S."/>
            <person name="Danchin A."/>
            <person name="Diard M."/>
            <person name="Dossat C."/>
            <person name="Karoui M.E."/>
            <person name="Frapy E."/>
            <person name="Garry L."/>
            <person name="Ghigo J.M."/>
            <person name="Gilles A.M."/>
            <person name="Johnson J."/>
            <person name="Le Bouguenec C."/>
            <person name="Lescat M."/>
            <person name="Mangenot S."/>
            <person name="Martinez-Jehanne V."/>
            <person name="Matic I."/>
            <person name="Nassif X."/>
            <person name="Oztas S."/>
            <person name="Petit M.A."/>
            <person name="Pichon C."/>
            <person name="Rouy Z."/>
            <person name="Ruf C.S."/>
            <person name="Schneider D."/>
            <person name="Tourret J."/>
            <person name="Vacherie B."/>
            <person name="Vallenet D."/>
            <person name="Medigue C."/>
            <person name="Rocha E.P.C."/>
            <person name="Denamur E."/>
        </authorList>
    </citation>
    <scope>NUCLEOTIDE SEQUENCE [LARGE SCALE GENOMIC DNA]</scope>
    <source>
        <strain>IAI39 / ExPEC</strain>
    </source>
</reference>
<keyword id="KW-0067">ATP-binding</keyword>
<keyword id="KW-0963">Cytoplasm</keyword>
<keyword id="KW-0436">Ligase</keyword>
<keyword id="KW-0547">Nucleotide-binding</keyword>
<proteinExistence type="inferred from homology"/>
<organism>
    <name type="scientific">Escherichia coli O7:K1 (strain IAI39 / ExPEC)</name>
    <dbReference type="NCBI Taxonomy" id="585057"/>
    <lineage>
        <taxon>Bacteria</taxon>
        <taxon>Pseudomonadati</taxon>
        <taxon>Pseudomonadota</taxon>
        <taxon>Gammaproteobacteria</taxon>
        <taxon>Enterobacterales</taxon>
        <taxon>Enterobacteriaceae</taxon>
        <taxon>Escherichia</taxon>
    </lineage>
</organism>
<protein>
    <recommendedName>
        <fullName evidence="1">RNA 3'-terminal phosphate cyclase</fullName>
        <shortName evidence="1">RNA cyclase</shortName>
        <shortName evidence="1">RNA-3'-phosphate cyclase</shortName>
        <ecNumber evidence="1">6.5.1.4</ecNumber>
    </recommendedName>
</protein>
<name>RTCA_ECO7I</name>
<feature type="chain" id="PRO_1000195100" description="RNA 3'-terminal phosphate cyclase">
    <location>
        <begin position="1"/>
        <end position="338"/>
    </location>
</feature>
<feature type="active site" description="Tele-AMP-histidine intermediate" evidence="1">
    <location>
        <position position="308"/>
    </location>
</feature>
<feature type="binding site" evidence="1">
    <location>
        <position position="103"/>
    </location>
    <ligand>
        <name>ATP</name>
        <dbReference type="ChEBI" id="CHEBI:30616"/>
    </ligand>
</feature>
<feature type="binding site" evidence="1">
    <location>
        <begin position="283"/>
        <end position="287"/>
    </location>
    <ligand>
        <name>ATP</name>
        <dbReference type="ChEBI" id="CHEBI:30616"/>
    </ligand>
</feature>
<comment type="function">
    <text evidence="1">Catalyzes the conversion of 3'-phosphate to a 2',3'-cyclic phosphodiester at the end of RNA. The mechanism of action of the enzyme occurs in 3 steps: (A) adenylation of the enzyme by ATP; (B) transfer of adenylate to an RNA-N3'P to produce RNA-N3'PP5'A; (C) and attack of the adjacent 2'-hydroxyl on the 3'-phosphorus in the diester linkage to produce the cyclic end product. The biological role of this enzyme is unknown but it is likely to function in some aspects of cellular RNA processing.</text>
</comment>
<comment type="catalytic activity">
    <reaction evidence="1">
        <text>a 3'-end 3'-phospho-ribonucleotide-RNA + ATP = a 3'-end 2',3'-cyclophospho-ribonucleotide-RNA + AMP + diphosphate</text>
        <dbReference type="Rhea" id="RHEA:23976"/>
        <dbReference type="Rhea" id="RHEA-COMP:10463"/>
        <dbReference type="Rhea" id="RHEA-COMP:10464"/>
        <dbReference type="ChEBI" id="CHEBI:30616"/>
        <dbReference type="ChEBI" id="CHEBI:33019"/>
        <dbReference type="ChEBI" id="CHEBI:83062"/>
        <dbReference type="ChEBI" id="CHEBI:83064"/>
        <dbReference type="ChEBI" id="CHEBI:456215"/>
        <dbReference type="EC" id="6.5.1.4"/>
    </reaction>
</comment>
<comment type="subcellular location">
    <subcellularLocation>
        <location evidence="1">Cytoplasm</location>
    </subcellularLocation>
</comment>
<comment type="similarity">
    <text evidence="1">Belongs to the RNA 3'-terminal cyclase family. Type 1 subfamily.</text>
</comment>